<evidence type="ECO:0000255" key="1">
    <source>
        <dbReference type="HAMAP-Rule" id="MF_01328"/>
    </source>
</evidence>
<evidence type="ECO:0000256" key="2">
    <source>
        <dbReference type="SAM" id="MobiDB-lite"/>
    </source>
</evidence>
<evidence type="ECO:0000305" key="3"/>
<sequence length="207" mass="22617">MANYDVLKVDGSKSGSVELSDSVFAIEPNNSVLFEAINLQRASLRQGTHAVKNRSAVRGGGRKPWRQKGTGRARQGTIRAPQWRGGGIVFGPTPRSYAYKMPKKMRRLALRSALSFKVKENNFTIVDNFGFEAPKTKEFKNVLTTLEQPKKVLVVTDSEDVNVELSARNIPGVQVSTAQGLNVLDITSADSVIITESAAKKVEEVLG</sequence>
<feature type="chain" id="PRO_0000129282" description="Large ribosomal subunit protein uL4">
    <location>
        <begin position="1"/>
        <end position="207"/>
    </location>
</feature>
<feature type="region of interest" description="Disordered" evidence="2">
    <location>
        <begin position="54"/>
        <end position="76"/>
    </location>
</feature>
<feature type="compositionally biased region" description="Basic residues" evidence="2">
    <location>
        <begin position="60"/>
        <end position="71"/>
    </location>
</feature>
<dbReference type="EMBL" id="AP006716">
    <property type="protein sequence ID" value="BAE04112.1"/>
    <property type="molecule type" value="Genomic_DNA"/>
</dbReference>
<dbReference type="RefSeq" id="WP_011275126.1">
    <property type="nucleotide sequence ID" value="NC_007168.1"/>
</dbReference>
<dbReference type="SMR" id="Q4L8B3"/>
<dbReference type="GeneID" id="93780192"/>
<dbReference type="KEGG" id="sha:SH0803"/>
<dbReference type="eggNOG" id="COG0088">
    <property type="taxonomic scope" value="Bacteria"/>
</dbReference>
<dbReference type="HOGENOM" id="CLU_041575_5_2_9"/>
<dbReference type="OrthoDB" id="9803201at2"/>
<dbReference type="Proteomes" id="UP000000543">
    <property type="component" value="Chromosome"/>
</dbReference>
<dbReference type="GO" id="GO:1990904">
    <property type="term" value="C:ribonucleoprotein complex"/>
    <property type="evidence" value="ECO:0007669"/>
    <property type="project" value="UniProtKB-KW"/>
</dbReference>
<dbReference type="GO" id="GO:0005840">
    <property type="term" value="C:ribosome"/>
    <property type="evidence" value="ECO:0007669"/>
    <property type="project" value="UniProtKB-KW"/>
</dbReference>
<dbReference type="GO" id="GO:0019843">
    <property type="term" value="F:rRNA binding"/>
    <property type="evidence" value="ECO:0007669"/>
    <property type="project" value="UniProtKB-UniRule"/>
</dbReference>
<dbReference type="GO" id="GO:0003735">
    <property type="term" value="F:structural constituent of ribosome"/>
    <property type="evidence" value="ECO:0007669"/>
    <property type="project" value="InterPro"/>
</dbReference>
<dbReference type="GO" id="GO:0006412">
    <property type="term" value="P:translation"/>
    <property type="evidence" value="ECO:0007669"/>
    <property type="project" value="UniProtKB-UniRule"/>
</dbReference>
<dbReference type="FunFam" id="3.40.1370.10:FF:000003">
    <property type="entry name" value="50S ribosomal protein L4"/>
    <property type="match status" value="1"/>
</dbReference>
<dbReference type="Gene3D" id="3.40.1370.10">
    <property type="match status" value="1"/>
</dbReference>
<dbReference type="HAMAP" id="MF_01328_B">
    <property type="entry name" value="Ribosomal_uL4_B"/>
    <property type="match status" value="1"/>
</dbReference>
<dbReference type="InterPro" id="IPR002136">
    <property type="entry name" value="Ribosomal_uL4"/>
</dbReference>
<dbReference type="InterPro" id="IPR013005">
    <property type="entry name" value="Ribosomal_uL4-like"/>
</dbReference>
<dbReference type="InterPro" id="IPR023574">
    <property type="entry name" value="Ribosomal_uL4_dom_sf"/>
</dbReference>
<dbReference type="NCBIfam" id="TIGR03953">
    <property type="entry name" value="rplD_bact"/>
    <property type="match status" value="1"/>
</dbReference>
<dbReference type="PANTHER" id="PTHR10746">
    <property type="entry name" value="50S RIBOSOMAL PROTEIN L4"/>
    <property type="match status" value="1"/>
</dbReference>
<dbReference type="PANTHER" id="PTHR10746:SF6">
    <property type="entry name" value="LARGE RIBOSOMAL SUBUNIT PROTEIN UL4M"/>
    <property type="match status" value="1"/>
</dbReference>
<dbReference type="Pfam" id="PF00573">
    <property type="entry name" value="Ribosomal_L4"/>
    <property type="match status" value="1"/>
</dbReference>
<dbReference type="SUPFAM" id="SSF52166">
    <property type="entry name" value="Ribosomal protein L4"/>
    <property type="match status" value="1"/>
</dbReference>
<comment type="function">
    <text evidence="1">One of the primary rRNA binding proteins, this protein initially binds near the 5'-end of the 23S rRNA. It is important during the early stages of 50S assembly. It makes multiple contacts with different domains of the 23S rRNA in the assembled 50S subunit and ribosome.</text>
</comment>
<comment type="function">
    <text evidence="1">Forms part of the polypeptide exit tunnel.</text>
</comment>
<comment type="subunit">
    <text evidence="1">Part of the 50S ribosomal subunit.</text>
</comment>
<comment type="similarity">
    <text evidence="1">Belongs to the universal ribosomal protein uL4 family.</text>
</comment>
<gene>
    <name evidence="1" type="primary">rplD</name>
    <name type="ordered locus">SH0803</name>
</gene>
<protein>
    <recommendedName>
        <fullName evidence="1">Large ribosomal subunit protein uL4</fullName>
    </recommendedName>
    <alternativeName>
        <fullName evidence="3">50S ribosomal protein L4</fullName>
    </alternativeName>
</protein>
<proteinExistence type="inferred from homology"/>
<name>RL4_STAHJ</name>
<reference key="1">
    <citation type="journal article" date="2005" name="J. Bacteriol.">
        <title>Whole-genome sequencing of Staphylococcus haemolyticus uncovers the extreme plasticity of its genome and the evolution of human-colonizing staphylococcal species.</title>
        <authorList>
            <person name="Takeuchi F."/>
            <person name="Watanabe S."/>
            <person name="Baba T."/>
            <person name="Yuzawa H."/>
            <person name="Ito T."/>
            <person name="Morimoto Y."/>
            <person name="Kuroda M."/>
            <person name="Cui L."/>
            <person name="Takahashi M."/>
            <person name="Ankai A."/>
            <person name="Baba S."/>
            <person name="Fukui S."/>
            <person name="Lee J.C."/>
            <person name="Hiramatsu K."/>
        </authorList>
    </citation>
    <scope>NUCLEOTIDE SEQUENCE [LARGE SCALE GENOMIC DNA]</scope>
    <source>
        <strain>JCSC1435</strain>
    </source>
</reference>
<accession>Q4L8B3</accession>
<organism>
    <name type="scientific">Staphylococcus haemolyticus (strain JCSC1435)</name>
    <dbReference type="NCBI Taxonomy" id="279808"/>
    <lineage>
        <taxon>Bacteria</taxon>
        <taxon>Bacillati</taxon>
        <taxon>Bacillota</taxon>
        <taxon>Bacilli</taxon>
        <taxon>Bacillales</taxon>
        <taxon>Staphylococcaceae</taxon>
        <taxon>Staphylococcus</taxon>
    </lineage>
</organism>
<keyword id="KW-0687">Ribonucleoprotein</keyword>
<keyword id="KW-0689">Ribosomal protein</keyword>
<keyword id="KW-0694">RNA-binding</keyword>
<keyword id="KW-0699">rRNA-binding</keyword>